<protein>
    <recommendedName>
        <fullName evidence="1">Shikimate kinase</fullName>
        <shortName evidence="1">SK</shortName>
        <ecNumber evidence="1">2.7.1.71</ecNumber>
    </recommendedName>
</protein>
<sequence length="191" mass="21695">MKHHSLIFLTGFSGSGKSTIGPLLANSLGFEFIDLDREIELTAGKSINRIFAEDGEAAFRSLELRTLEKIGQQERMVVSLGGGVLENDRCFELIRSHGTLIYLKSSPEILTLRLQHKTDRPLLKGPDGRKLTREEIQQRIAELLKKREPRYLKADLVLFTDSKKIGASVEELTRKIERHIRRASKNNTNEK</sequence>
<proteinExistence type="inferred from homology"/>
<gene>
    <name evidence="1" type="primary">aroK</name>
    <name type="ordered locus">CT1405</name>
</gene>
<organism>
    <name type="scientific">Chlorobaculum tepidum (strain ATCC 49652 / DSM 12025 / NBRC 103806 / TLS)</name>
    <name type="common">Chlorobium tepidum</name>
    <dbReference type="NCBI Taxonomy" id="194439"/>
    <lineage>
        <taxon>Bacteria</taxon>
        <taxon>Pseudomonadati</taxon>
        <taxon>Chlorobiota</taxon>
        <taxon>Chlorobiia</taxon>
        <taxon>Chlorobiales</taxon>
        <taxon>Chlorobiaceae</taxon>
        <taxon>Chlorobaculum</taxon>
    </lineage>
</organism>
<dbReference type="EC" id="2.7.1.71" evidence="1"/>
<dbReference type="EMBL" id="AE006470">
    <property type="protein sequence ID" value="AAM72633.1"/>
    <property type="molecule type" value="Genomic_DNA"/>
</dbReference>
<dbReference type="RefSeq" id="NP_662291.1">
    <property type="nucleotide sequence ID" value="NC_002932.3"/>
</dbReference>
<dbReference type="RefSeq" id="WP_010933072.1">
    <property type="nucleotide sequence ID" value="NC_002932.3"/>
</dbReference>
<dbReference type="SMR" id="Q8KCL0"/>
<dbReference type="STRING" id="194439.CT1405"/>
<dbReference type="EnsemblBacteria" id="AAM72633">
    <property type="protein sequence ID" value="AAM72633"/>
    <property type="gene ID" value="CT1405"/>
</dbReference>
<dbReference type="KEGG" id="cte:CT1405"/>
<dbReference type="PATRIC" id="fig|194439.7.peg.1274"/>
<dbReference type="eggNOG" id="COG0703">
    <property type="taxonomic scope" value="Bacteria"/>
</dbReference>
<dbReference type="HOGENOM" id="CLU_057607_2_1_10"/>
<dbReference type="OrthoDB" id="9800332at2"/>
<dbReference type="UniPathway" id="UPA00053">
    <property type="reaction ID" value="UER00088"/>
</dbReference>
<dbReference type="Proteomes" id="UP000001007">
    <property type="component" value="Chromosome"/>
</dbReference>
<dbReference type="GO" id="GO:0005829">
    <property type="term" value="C:cytosol"/>
    <property type="evidence" value="ECO:0007669"/>
    <property type="project" value="TreeGrafter"/>
</dbReference>
<dbReference type="GO" id="GO:0005524">
    <property type="term" value="F:ATP binding"/>
    <property type="evidence" value="ECO:0007669"/>
    <property type="project" value="UniProtKB-UniRule"/>
</dbReference>
<dbReference type="GO" id="GO:0000287">
    <property type="term" value="F:magnesium ion binding"/>
    <property type="evidence" value="ECO:0007669"/>
    <property type="project" value="UniProtKB-UniRule"/>
</dbReference>
<dbReference type="GO" id="GO:0004765">
    <property type="term" value="F:shikimate kinase activity"/>
    <property type="evidence" value="ECO:0007669"/>
    <property type="project" value="UniProtKB-UniRule"/>
</dbReference>
<dbReference type="GO" id="GO:0008652">
    <property type="term" value="P:amino acid biosynthetic process"/>
    <property type="evidence" value="ECO:0007669"/>
    <property type="project" value="UniProtKB-KW"/>
</dbReference>
<dbReference type="GO" id="GO:0009073">
    <property type="term" value="P:aromatic amino acid family biosynthetic process"/>
    <property type="evidence" value="ECO:0007669"/>
    <property type="project" value="UniProtKB-KW"/>
</dbReference>
<dbReference type="GO" id="GO:0009423">
    <property type="term" value="P:chorismate biosynthetic process"/>
    <property type="evidence" value="ECO:0007669"/>
    <property type="project" value="UniProtKB-UniRule"/>
</dbReference>
<dbReference type="CDD" id="cd00464">
    <property type="entry name" value="SK"/>
    <property type="match status" value="1"/>
</dbReference>
<dbReference type="Gene3D" id="3.40.50.300">
    <property type="entry name" value="P-loop containing nucleotide triphosphate hydrolases"/>
    <property type="match status" value="1"/>
</dbReference>
<dbReference type="HAMAP" id="MF_00109">
    <property type="entry name" value="Shikimate_kinase"/>
    <property type="match status" value="1"/>
</dbReference>
<dbReference type="InterPro" id="IPR027417">
    <property type="entry name" value="P-loop_NTPase"/>
</dbReference>
<dbReference type="InterPro" id="IPR031322">
    <property type="entry name" value="Shikimate/glucono_kinase"/>
</dbReference>
<dbReference type="InterPro" id="IPR000623">
    <property type="entry name" value="Shikimate_kinase/TSH1"/>
</dbReference>
<dbReference type="InterPro" id="IPR023000">
    <property type="entry name" value="Shikimate_kinase_CS"/>
</dbReference>
<dbReference type="PANTHER" id="PTHR21087">
    <property type="entry name" value="SHIKIMATE KINASE"/>
    <property type="match status" value="1"/>
</dbReference>
<dbReference type="PANTHER" id="PTHR21087:SF16">
    <property type="entry name" value="SHIKIMATE KINASE 1, CHLOROPLASTIC"/>
    <property type="match status" value="1"/>
</dbReference>
<dbReference type="Pfam" id="PF01202">
    <property type="entry name" value="SKI"/>
    <property type="match status" value="1"/>
</dbReference>
<dbReference type="PRINTS" id="PR01100">
    <property type="entry name" value="SHIKIMTKNASE"/>
</dbReference>
<dbReference type="SUPFAM" id="SSF52540">
    <property type="entry name" value="P-loop containing nucleoside triphosphate hydrolases"/>
    <property type="match status" value="1"/>
</dbReference>
<dbReference type="PROSITE" id="PS01128">
    <property type="entry name" value="SHIKIMATE_KINASE"/>
    <property type="match status" value="1"/>
</dbReference>
<evidence type="ECO:0000255" key="1">
    <source>
        <dbReference type="HAMAP-Rule" id="MF_00109"/>
    </source>
</evidence>
<comment type="function">
    <text evidence="1">Catalyzes the specific phosphorylation of the 3-hydroxyl group of shikimic acid using ATP as a cosubstrate.</text>
</comment>
<comment type="catalytic activity">
    <reaction evidence="1">
        <text>shikimate + ATP = 3-phosphoshikimate + ADP + H(+)</text>
        <dbReference type="Rhea" id="RHEA:13121"/>
        <dbReference type="ChEBI" id="CHEBI:15378"/>
        <dbReference type="ChEBI" id="CHEBI:30616"/>
        <dbReference type="ChEBI" id="CHEBI:36208"/>
        <dbReference type="ChEBI" id="CHEBI:145989"/>
        <dbReference type="ChEBI" id="CHEBI:456216"/>
        <dbReference type="EC" id="2.7.1.71"/>
    </reaction>
</comment>
<comment type="cofactor">
    <cofactor evidence="1">
        <name>Mg(2+)</name>
        <dbReference type="ChEBI" id="CHEBI:18420"/>
    </cofactor>
    <text evidence="1">Binds 1 Mg(2+) ion per subunit.</text>
</comment>
<comment type="pathway">
    <text evidence="1">Metabolic intermediate biosynthesis; chorismate biosynthesis; chorismate from D-erythrose 4-phosphate and phosphoenolpyruvate: step 5/7.</text>
</comment>
<comment type="subunit">
    <text evidence="1">Monomer.</text>
</comment>
<comment type="subcellular location">
    <subcellularLocation>
        <location evidence="1">Cytoplasm</location>
    </subcellularLocation>
</comment>
<comment type="similarity">
    <text evidence="1">Belongs to the shikimate kinase family.</text>
</comment>
<feature type="chain" id="PRO_0000237864" description="Shikimate kinase">
    <location>
        <begin position="1"/>
        <end position="191"/>
    </location>
</feature>
<feature type="binding site" evidence="1">
    <location>
        <begin position="14"/>
        <end position="19"/>
    </location>
    <ligand>
        <name>ATP</name>
        <dbReference type="ChEBI" id="CHEBI:30616"/>
    </ligand>
</feature>
<feature type="binding site" evidence="1">
    <location>
        <position position="18"/>
    </location>
    <ligand>
        <name>Mg(2+)</name>
        <dbReference type="ChEBI" id="CHEBI:18420"/>
    </ligand>
</feature>
<feature type="binding site" evidence="1">
    <location>
        <position position="36"/>
    </location>
    <ligand>
        <name>substrate</name>
    </ligand>
</feature>
<feature type="binding site" evidence="1">
    <location>
        <position position="60"/>
    </location>
    <ligand>
        <name>substrate</name>
    </ligand>
</feature>
<feature type="binding site" evidence="1">
    <location>
        <position position="82"/>
    </location>
    <ligand>
        <name>substrate</name>
    </ligand>
</feature>
<feature type="binding site" evidence="1">
    <location>
        <position position="120"/>
    </location>
    <ligand>
        <name>ATP</name>
        <dbReference type="ChEBI" id="CHEBI:30616"/>
    </ligand>
</feature>
<feature type="binding site" evidence="1">
    <location>
        <position position="147"/>
    </location>
    <ligand>
        <name>substrate</name>
    </ligand>
</feature>
<name>AROK_CHLTE</name>
<accession>Q8KCL0</accession>
<reference key="1">
    <citation type="journal article" date="2002" name="Proc. Natl. Acad. Sci. U.S.A.">
        <title>The complete genome sequence of Chlorobium tepidum TLS, a photosynthetic, anaerobic, green-sulfur bacterium.</title>
        <authorList>
            <person name="Eisen J.A."/>
            <person name="Nelson K.E."/>
            <person name="Paulsen I.T."/>
            <person name="Heidelberg J.F."/>
            <person name="Wu M."/>
            <person name="Dodson R.J."/>
            <person name="DeBoy R.T."/>
            <person name="Gwinn M.L."/>
            <person name="Nelson W.C."/>
            <person name="Haft D.H."/>
            <person name="Hickey E.K."/>
            <person name="Peterson J.D."/>
            <person name="Durkin A.S."/>
            <person name="Kolonay J.F."/>
            <person name="Yang F."/>
            <person name="Holt I.E."/>
            <person name="Umayam L.A."/>
            <person name="Mason T.M."/>
            <person name="Brenner M."/>
            <person name="Shea T.P."/>
            <person name="Parksey D.S."/>
            <person name="Nierman W.C."/>
            <person name="Feldblyum T.V."/>
            <person name="Hansen C.L."/>
            <person name="Craven M.B."/>
            <person name="Radune D."/>
            <person name="Vamathevan J.J."/>
            <person name="Khouri H.M."/>
            <person name="White O."/>
            <person name="Gruber T.M."/>
            <person name="Ketchum K.A."/>
            <person name="Venter J.C."/>
            <person name="Tettelin H."/>
            <person name="Bryant D.A."/>
            <person name="Fraser C.M."/>
        </authorList>
    </citation>
    <scope>NUCLEOTIDE SEQUENCE [LARGE SCALE GENOMIC DNA]</scope>
    <source>
        <strain>ATCC 49652 / DSM 12025 / NBRC 103806 / TLS</strain>
    </source>
</reference>
<keyword id="KW-0028">Amino-acid biosynthesis</keyword>
<keyword id="KW-0057">Aromatic amino acid biosynthesis</keyword>
<keyword id="KW-0067">ATP-binding</keyword>
<keyword id="KW-0963">Cytoplasm</keyword>
<keyword id="KW-0418">Kinase</keyword>
<keyword id="KW-0460">Magnesium</keyword>
<keyword id="KW-0479">Metal-binding</keyword>
<keyword id="KW-0547">Nucleotide-binding</keyword>
<keyword id="KW-1185">Reference proteome</keyword>
<keyword id="KW-0808">Transferase</keyword>